<accession>A4GDT5</accession>
<feature type="initiator methionine" description="Removed" evidence="1">
    <location>
        <position position="1"/>
    </location>
</feature>
<feature type="chain" id="PRO_0000425025" description="Profilin-3">
    <location>
        <begin position="2"/>
        <end position="134"/>
    </location>
</feature>
<feature type="short sequence motif" description="Involved in PIP2 interaction">
    <location>
        <begin position="84"/>
        <end position="100"/>
    </location>
</feature>
<feature type="disulfide bond" evidence="3">
    <location>
        <begin position="13"/>
        <end position="118"/>
    </location>
</feature>
<name>PROBH_OLEEU</name>
<evidence type="ECO:0000250" key="1"/>
<evidence type="ECO:0000305" key="2"/>
<evidence type="ECO:0000305" key="3">
    <source>
    </source>
</evidence>
<reference key="1">
    <citation type="journal article" date="2012" name="PLoS ONE">
        <title>Characterization of profilin polymorphism in pollen with a focus on multifunctionality.</title>
        <authorList>
            <person name="Jimenez-Lopez J.C."/>
            <person name="Morales S."/>
            <person name="Castro A.J."/>
            <person name="Volkmann D."/>
            <person name="Rodriguez-Garcia M.I."/>
            <person name="Alche Jde D."/>
        </authorList>
    </citation>
    <scope>NUCLEOTIDE SEQUENCE [MRNA]</scope>
    <scope>POLYMORPHISM</scope>
    <source>
        <strain>cv. Villalonga</strain>
    </source>
</reference>
<reference key="2">
    <citation type="journal article" date="2013" name="PLoS ONE">
        <title>Analysis of the effects of polymorphism on pollen profilin structural functionality and the generation of conformational, T- and B-cell epitopes.</title>
        <authorList>
            <person name="Jimenez-Lopez J.C."/>
            <person name="Rodriguez-Garcia M.I."/>
            <person name="Alche J.D."/>
        </authorList>
    </citation>
    <scope>3D-STRUCTURE MODELING</scope>
    <scope>DISULFIDE BOND</scope>
</reference>
<proteinExistence type="evidence at protein level"/>
<dbReference type="EMBL" id="DQ138353">
    <property type="protein sequence ID" value="AAZ30431.1"/>
    <property type="molecule type" value="mRNA"/>
</dbReference>
<dbReference type="SMR" id="A4GDT5"/>
<dbReference type="Allergome" id="490">
    <property type="allergen name" value="Ole e 2"/>
</dbReference>
<dbReference type="GO" id="GO:0005938">
    <property type="term" value="C:cell cortex"/>
    <property type="evidence" value="ECO:0007669"/>
    <property type="project" value="TreeGrafter"/>
</dbReference>
<dbReference type="GO" id="GO:0005856">
    <property type="term" value="C:cytoskeleton"/>
    <property type="evidence" value="ECO:0007669"/>
    <property type="project" value="UniProtKB-SubCell"/>
</dbReference>
<dbReference type="GO" id="GO:0003785">
    <property type="term" value="F:actin monomer binding"/>
    <property type="evidence" value="ECO:0007669"/>
    <property type="project" value="TreeGrafter"/>
</dbReference>
<dbReference type="CDD" id="cd00148">
    <property type="entry name" value="PROF"/>
    <property type="match status" value="1"/>
</dbReference>
<dbReference type="FunFam" id="3.30.450.30:FF:000001">
    <property type="entry name" value="Profilin"/>
    <property type="match status" value="1"/>
</dbReference>
<dbReference type="Gene3D" id="3.30.450.30">
    <property type="entry name" value="Dynein light chain 2a, cytoplasmic"/>
    <property type="match status" value="1"/>
</dbReference>
<dbReference type="InterPro" id="IPR048278">
    <property type="entry name" value="PFN"/>
</dbReference>
<dbReference type="InterPro" id="IPR005455">
    <property type="entry name" value="PFN_euk"/>
</dbReference>
<dbReference type="InterPro" id="IPR036140">
    <property type="entry name" value="PFN_sf"/>
</dbReference>
<dbReference type="InterPro" id="IPR027310">
    <property type="entry name" value="Profilin_CS"/>
</dbReference>
<dbReference type="PANTHER" id="PTHR11604">
    <property type="entry name" value="PROFILIN"/>
    <property type="match status" value="1"/>
</dbReference>
<dbReference type="PANTHER" id="PTHR11604:SF25">
    <property type="entry name" value="PROFILIN-5"/>
    <property type="match status" value="1"/>
</dbReference>
<dbReference type="Pfam" id="PF00235">
    <property type="entry name" value="Profilin"/>
    <property type="match status" value="1"/>
</dbReference>
<dbReference type="PRINTS" id="PR00392">
    <property type="entry name" value="PROFILIN"/>
</dbReference>
<dbReference type="PRINTS" id="PR01640">
    <property type="entry name" value="PROFILINPLNT"/>
</dbReference>
<dbReference type="SMART" id="SM00392">
    <property type="entry name" value="PROF"/>
    <property type="match status" value="1"/>
</dbReference>
<dbReference type="SUPFAM" id="SSF55770">
    <property type="entry name" value="Profilin (actin-binding protein)"/>
    <property type="match status" value="1"/>
</dbReference>
<dbReference type="PROSITE" id="PS00414">
    <property type="entry name" value="PROFILIN"/>
    <property type="match status" value="1"/>
</dbReference>
<comment type="function">
    <text evidence="1">Binds to actin and affects the structure of the cytoskeleton. At high concentrations, profilin prevents the polymerization of actin, whereas it enhances it at low concentrations (By similarity).</text>
</comment>
<comment type="subunit">
    <text evidence="1">Occurs in many kinds of cells as a complex with monomeric actin in a 1:1 ratio.</text>
</comment>
<comment type="subcellular location">
    <subcellularLocation>
        <location evidence="1">Cytoplasm</location>
        <location evidence="1">Cytoskeleton</location>
    </subcellularLocation>
</comment>
<comment type="PTM">
    <text evidence="1">Phosphorylated by MAP kinases.</text>
</comment>
<comment type="polymorphism">
    <text>Several isoforms of the allergen exist due to polymorphism.</text>
</comment>
<comment type="allergen">
    <text>Causes an allergic reaction in human.</text>
</comment>
<comment type="miscellaneous">
    <text evidence="3">The variability of the residues taking part of IgE-binding epitopes might be responsible of the difference in cross-reactivity among olive pollen cultivars, and between distantly related pollen species, leading to a variable range of allergy reactions among atopic patients.</text>
</comment>
<comment type="similarity">
    <text evidence="2">Belongs to the profilin family.</text>
</comment>
<organism>
    <name type="scientific">Olea europaea</name>
    <name type="common">Common olive</name>
    <dbReference type="NCBI Taxonomy" id="4146"/>
    <lineage>
        <taxon>Eukaryota</taxon>
        <taxon>Viridiplantae</taxon>
        <taxon>Streptophyta</taxon>
        <taxon>Embryophyta</taxon>
        <taxon>Tracheophyta</taxon>
        <taxon>Spermatophyta</taxon>
        <taxon>Magnoliopsida</taxon>
        <taxon>eudicotyledons</taxon>
        <taxon>Gunneridae</taxon>
        <taxon>Pentapetalae</taxon>
        <taxon>asterids</taxon>
        <taxon>lamiids</taxon>
        <taxon>Lamiales</taxon>
        <taxon>Oleaceae</taxon>
        <taxon>Oleeae</taxon>
        <taxon>Olea</taxon>
    </lineage>
</organism>
<keyword id="KW-0009">Actin-binding</keyword>
<keyword id="KW-0020">Allergen</keyword>
<keyword id="KW-0963">Cytoplasm</keyword>
<keyword id="KW-0206">Cytoskeleton</keyword>
<keyword id="KW-1015">Disulfide bond</keyword>
<keyword id="KW-0597">Phosphoprotein</keyword>
<sequence>MSWQAYVDDHLMCDIEGHEGHRLTAAAIVGHDGSVWAQSATFPQFKPEEMNGIMTDFNEPGHLAPTGLHLGGTKYMVIQGEAGAVIRGKKGSGGITIKKTGQALVFGIYEEPVAPGQCNMVVERLGDYLLEQGL</sequence>
<protein>
    <recommendedName>
        <fullName>Profilin-3</fullName>
    </recommendedName>
    <alternativeName>
        <fullName>Pollen allergen Ole e 2</fullName>
    </alternativeName>
    <allergenName>Ole e 2</allergenName>
</protein>